<comment type="function">
    <text evidence="3">Involved in the regulation of melanogenesis. The binding of ASP to MC1R precludes alpha-MSH initiated signaling and thus blocks production of cAMP, leading to a down-regulation of eumelanogenesis (brown/black pigment) and thus increasing synthesis of pheomelanin (yellow/red pigment) (By similarity).</text>
</comment>
<comment type="subcellular location">
    <subcellularLocation>
        <location evidence="2">Secreted</location>
    </subcellularLocation>
</comment>
<comment type="domain">
    <text evidence="1">The presence of a 'disulfide through disulfide knot' structurally defines this protein as a knottin.</text>
</comment>
<gene>
    <name type="primary">ASIP</name>
</gene>
<evidence type="ECO:0000250" key="1"/>
<evidence type="ECO:0000250" key="2">
    <source>
        <dbReference type="UniProtKB" id="P42127"/>
    </source>
</evidence>
<evidence type="ECO:0000250" key="3">
    <source>
        <dbReference type="UniProtKB" id="Q03288"/>
    </source>
</evidence>
<evidence type="ECO:0000255" key="4"/>
<evidence type="ECO:0000255" key="5">
    <source>
        <dbReference type="PROSITE-ProRule" id="PRU00494"/>
    </source>
</evidence>
<evidence type="ECO:0000256" key="6">
    <source>
        <dbReference type="SAM" id="MobiDB-lite"/>
    </source>
</evidence>
<keyword id="KW-1015">Disulfide bond</keyword>
<keyword id="KW-0325">Glycoprotein</keyword>
<keyword id="KW-0960">Knottin</keyword>
<keyword id="KW-0964">Secreted</keyword>
<keyword id="KW-0732">Signal</keyword>
<sequence>MDVTRLLLATLLVFLCFFTVYSHLPPEEKLRDDRSLRSNSSVNLLDFPSVSIVALNKKSKQISRKEAEKKRSSKKEASMKKVAQPRTPLSAPCVATRDSCKPPAPACCDPCASCQCRFFRSACSCRVLSLNC</sequence>
<protein>
    <recommendedName>
        <fullName>Agouti-signaling protein</fullName>
        <shortName>ASP</shortName>
    </recommendedName>
    <alternativeName>
        <fullName>Agouti switch protein</fullName>
    </alternativeName>
</protein>
<reference key="1">
    <citation type="journal article" date="2006" name="Mamm. Genome">
        <title>Investigation of the role of the agouti signaling protein gene (ASIP) in coat color evolution in primates.</title>
        <authorList>
            <person name="Mundy N.I."/>
            <person name="Kelly J."/>
        </authorList>
    </citation>
    <scope>NUCLEOTIDE SEQUENCE [GENOMIC DNA]</scope>
</reference>
<accession>A1YL74</accession>
<dbReference type="EMBL" id="EF094491">
    <property type="protein sequence ID" value="ABL84289.1"/>
    <property type="molecule type" value="Genomic_DNA"/>
</dbReference>
<dbReference type="RefSeq" id="XP_033042040.1">
    <property type="nucleotide sequence ID" value="XM_033186149.1"/>
</dbReference>
<dbReference type="GlyCosmos" id="A1YL74">
    <property type="glycosylation" value="1 site, No reported glycans"/>
</dbReference>
<dbReference type="GeneID" id="117068670"/>
<dbReference type="GO" id="GO:0005615">
    <property type="term" value="C:extracellular space"/>
    <property type="evidence" value="ECO:0000250"/>
    <property type="project" value="UniProtKB"/>
</dbReference>
<dbReference type="GO" id="GO:0031779">
    <property type="term" value="F:melanocortin receptor binding"/>
    <property type="evidence" value="ECO:0007669"/>
    <property type="project" value="TreeGrafter"/>
</dbReference>
<dbReference type="GO" id="GO:0005184">
    <property type="term" value="F:neuropeptide hormone activity"/>
    <property type="evidence" value="ECO:0007669"/>
    <property type="project" value="TreeGrafter"/>
</dbReference>
<dbReference type="GO" id="GO:0009755">
    <property type="term" value="P:hormone-mediated signaling pathway"/>
    <property type="evidence" value="ECO:0007669"/>
    <property type="project" value="InterPro"/>
</dbReference>
<dbReference type="GO" id="GO:0042438">
    <property type="term" value="P:melanin biosynthetic process"/>
    <property type="evidence" value="ECO:0000250"/>
    <property type="project" value="UniProtKB"/>
</dbReference>
<dbReference type="GO" id="GO:0032438">
    <property type="term" value="P:melanosome organization"/>
    <property type="evidence" value="ECO:0007669"/>
    <property type="project" value="TreeGrafter"/>
</dbReference>
<dbReference type="FunFam" id="4.10.760.10:FF:000002">
    <property type="entry name" value="Agouti-signaling protein"/>
    <property type="match status" value="1"/>
</dbReference>
<dbReference type="Gene3D" id="4.10.760.10">
    <property type="entry name" value="Agouti domain"/>
    <property type="match status" value="1"/>
</dbReference>
<dbReference type="InterPro" id="IPR007733">
    <property type="entry name" value="Agouti"/>
</dbReference>
<dbReference type="InterPro" id="IPR027300">
    <property type="entry name" value="Agouti_dom"/>
</dbReference>
<dbReference type="InterPro" id="IPR036836">
    <property type="entry name" value="Agouti_dom_sf"/>
</dbReference>
<dbReference type="PANTHER" id="PTHR16551">
    <property type="entry name" value="AGOUTI RELATED"/>
    <property type="match status" value="1"/>
</dbReference>
<dbReference type="PANTHER" id="PTHR16551:SF1">
    <property type="entry name" value="AGOUTI-SIGNALING PROTEIN"/>
    <property type="match status" value="1"/>
</dbReference>
<dbReference type="Pfam" id="PF05039">
    <property type="entry name" value="Agouti"/>
    <property type="match status" value="1"/>
</dbReference>
<dbReference type="SMART" id="SM00792">
    <property type="entry name" value="Agouti"/>
    <property type="match status" value="1"/>
</dbReference>
<dbReference type="SUPFAM" id="SSF57055">
    <property type="entry name" value="Agouti-related protein"/>
    <property type="match status" value="1"/>
</dbReference>
<dbReference type="PROSITE" id="PS60024">
    <property type="entry name" value="AGOUTI_1"/>
    <property type="match status" value="1"/>
</dbReference>
<dbReference type="PROSITE" id="PS51150">
    <property type="entry name" value="AGOUTI_2"/>
    <property type="match status" value="1"/>
</dbReference>
<organism>
    <name type="scientific">Trachypithecus francoisi</name>
    <name type="common">Francois' leaf monkey</name>
    <name type="synonym">Presbytis francoisi</name>
    <dbReference type="NCBI Taxonomy" id="54180"/>
    <lineage>
        <taxon>Eukaryota</taxon>
        <taxon>Metazoa</taxon>
        <taxon>Chordata</taxon>
        <taxon>Craniata</taxon>
        <taxon>Vertebrata</taxon>
        <taxon>Euteleostomi</taxon>
        <taxon>Mammalia</taxon>
        <taxon>Eutheria</taxon>
        <taxon>Euarchontoglires</taxon>
        <taxon>Primates</taxon>
        <taxon>Haplorrhini</taxon>
        <taxon>Catarrhini</taxon>
        <taxon>Cercopithecidae</taxon>
        <taxon>Colobinae</taxon>
        <taxon>Trachypithecus</taxon>
    </lineage>
</organism>
<proteinExistence type="inferred from homology"/>
<feature type="signal peptide" evidence="4">
    <location>
        <begin position="1"/>
        <end position="22"/>
    </location>
</feature>
<feature type="chain" id="PRO_0000285062" description="Agouti-signaling protein">
    <location>
        <begin position="23"/>
        <end position="132"/>
    </location>
</feature>
<feature type="domain" description="Agouti" evidence="5">
    <location>
        <begin position="93"/>
        <end position="132"/>
    </location>
</feature>
<feature type="region of interest" description="Disordered" evidence="6">
    <location>
        <begin position="62"/>
        <end position="93"/>
    </location>
</feature>
<feature type="compositionally biased region" description="Basic and acidic residues" evidence="6">
    <location>
        <begin position="63"/>
        <end position="79"/>
    </location>
</feature>
<feature type="glycosylation site" description="N-linked (GlcNAc...) asparagine" evidence="4">
    <location>
        <position position="39"/>
    </location>
</feature>
<feature type="disulfide bond" evidence="5">
    <location>
        <begin position="93"/>
        <end position="108"/>
    </location>
</feature>
<feature type="disulfide bond" evidence="5">
    <location>
        <begin position="100"/>
        <end position="114"/>
    </location>
</feature>
<feature type="disulfide bond" evidence="5">
    <location>
        <begin position="107"/>
        <end position="125"/>
    </location>
</feature>
<feature type="disulfide bond" evidence="5">
    <location>
        <begin position="111"/>
        <end position="132"/>
    </location>
</feature>
<feature type="disulfide bond" evidence="5">
    <location>
        <begin position="116"/>
        <end position="123"/>
    </location>
</feature>
<name>ASIP_TRAFR</name>